<keyword id="KW-0084">Basement membrane</keyword>
<keyword id="KW-0106">Calcium</keyword>
<keyword id="KW-0186">Copper</keyword>
<keyword id="KW-0903">Direct protein sequencing</keyword>
<keyword id="KW-1015">Disulfide bond</keyword>
<keyword id="KW-0272">Extracellular matrix</keyword>
<keyword id="KW-0325">Glycoprotein</keyword>
<keyword id="KW-1185">Reference proteome</keyword>
<keyword id="KW-0964">Secreted</keyword>
<keyword id="KW-0732">Signal</keyword>
<dbReference type="EMBL" id="AF247647">
    <property type="protein sequence ID" value="AAG17615.1"/>
    <property type="molecule type" value="mRNA"/>
</dbReference>
<dbReference type="PIR" id="S16170">
    <property type="entry name" value="S16170"/>
</dbReference>
<dbReference type="SMR" id="P36233"/>
<dbReference type="FunCoup" id="P36233">
    <property type="interactions" value="101"/>
</dbReference>
<dbReference type="STRING" id="9986.ENSOCUP00000010426"/>
<dbReference type="GlyCosmos" id="P36233">
    <property type="glycosylation" value="1 site, No reported glycans"/>
</dbReference>
<dbReference type="PaxDb" id="9986-ENSOCUP00000010424"/>
<dbReference type="eggNOG" id="KOG4004">
    <property type="taxonomic scope" value="Eukaryota"/>
</dbReference>
<dbReference type="InParanoid" id="P36233"/>
<dbReference type="Proteomes" id="UP000001811">
    <property type="component" value="Unplaced"/>
</dbReference>
<dbReference type="GO" id="GO:0005604">
    <property type="term" value="C:basement membrane"/>
    <property type="evidence" value="ECO:0007669"/>
    <property type="project" value="UniProtKB-SubCell"/>
</dbReference>
<dbReference type="GO" id="GO:0005615">
    <property type="term" value="C:extracellular space"/>
    <property type="evidence" value="ECO:0007669"/>
    <property type="project" value="InterPro"/>
</dbReference>
<dbReference type="GO" id="GO:0005509">
    <property type="term" value="F:calcium ion binding"/>
    <property type="evidence" value="ECO:0007669"/>
    <property type="project" value="InterPro"/>
</dbReference>
<dbReference type="GO" id="GO:0005518">
    <property type="term" value="F:collagen binding"/>
    <property type="evidence" value="ECO:0007669"/>
    <property type="project" value="TreeGrafter"/>
</dbReference>
<dbReference type="GO" id="GO:0050840">
    <property type="term" value="F:extracellular matrix binding"/>
    <property type="evidence" value="ECO:0007669"/>
    <property type="project" value="TreeGrafter"/>
</dbReference>
<dbReference type="CDD" id="cd01328">
    <property type="entry name" value="FSL_SPARC"/>
    <property type="match status" value="1"/>
</dbReference>
<dbReference type="FunFam" id="1.10.238.10:FF:000068">
    <property type="entry name" value="SPARC isoform 1"/>
    <property type="match status" value="1"/>
</dbReference>
<dbReference type="FunFam" id="3.30.60.30:FF:000004">
    <property type="entry name" value="SPARC isoform 1"/>
    <property type="match status" value="1"/>
</dbReference>
<dbReference type="Gene3D" id="3.30.60.30">
    <property type="match status" value="1"/>
</dbReference>
<dbReference type="Gene3D" id="1.10.238.10">
    <property type="entry name" value="EF-hand"/>
    <property type="match status" value="1"/>
</dbReference>
<dbReference type="InterPro" id="IPR011992">
    <property type="entry name" value="EF-hand-dom_pair"/>
</dbReference>
<dbReference type="InterPro" id="IPR003645">
    <property type="entry name" value="Fol_N"/>
</dbReference>
<dbReference type="InterPro" id="IPR015369">
    <property type="entry name" value="Follistatin/Osteonectin_EGF"/>
</dbReference>
<dbReference type="InterPro" id="IPR002350">
    <property type="entry name" value="Kazal_dom"/>
</dbReference>
<dbReference type="InterPro" id="IPR036058">
    <property type="entry name" value="Kazal_dom_sf"/>
</dbReference>
<dbReference type="InterPro" id="IPR001999">
    <property type="entry name" value="Osteonectin_CS"/>
</dbReference>
<dbReference type="InterPro" id="IPR019577">
    <property type="entry name" value="SPARC/Testican_Ca-bd-dom"/>
</dbReference>
<dbReference type="InterPro" id="IPR037641">
    <property type="entry name" value="SPARC_FS"/>
</dbReference>
<dbReference type="PANTHER" id="PTHR13866:SF6">
    <property type="entry name" value="SPARC"/>
    <property type="match status" value="1"/>
</dbReference>
<dbReference type="PANTHER" id="PTHR13866">
    <property type="entry name" value="SPARC OSTEONECTIN"/>
    <property type="match status" value="1"/>
</dbReference>
<dbReference type="Pfam" id="PF09289">
    <property type="entry name" value="FOLN"/>
    <property type="match status" value="1"/>
</dbReference>
<dbReference type="Pfam" id="PF00050">
    <property type="entry name" value="Kazal_1"/>
    <property type="match status" value="1"/>
</dbReference>
<dbReference type="Pfam" id="PF10591">
    <property type="entry name" value="SPARC_Ca_bdg"/>
    <property type="match status" value="1"/>
</dbReference>
<dbReference type="SMART" id="SM00274">
    <property type="entry name" value="FOLN"/>
    <property type="match status" value="1"/>
</dbReference>
<dbReference type="SMART" id="SM00280">
    <property type="entry name" value="KAZAL"/>
    <property type="match status" value="1"/>
</dbReference>
<dbReference type="SUPFAM" id="SSF47473">
    <property type="entry name" value="EF-hand"/>
    <property type="match status" value="1"/>
</dbReference>
<dbReference type="SUPFAM" id="SSF57196">
    <property type="entry name" value="EGF/Laminin"/>
    <property type="match status" value="1"/>
</dbReference>
<dbReference type="SUPFAM" id="SSF100895">
    <property type="entry name" value="Kazal-type serine protease inhibitors"/>
    <property type="match status" value="1"/>
</dbReference>
<dbReference type="PROSITE" id="PS51465">
    <property type="entry name" value="KAZAL_2"/>
    <property type="match status" value="1"/>
</dbReference>
<dbReference type="PROSITE" id="PS00612">
    <property type="entry name" value="OSTEONECTIN_1"/>
    <property type="match status" value="1"/>
</dbReference>
<dbReference type="PROSITE" id="PS00613">
    <property type="entry name" value="OSTEONECTIN_2"/>
    <property type="match status" value="1"/>
</dbReference>
<feature type="signal peptide" evidence="5">
    <location>
        <begin position="1"/>
        <end position="17"/>
    </location>
</feature>
<feature type="chain" id="PRO_0000020307" description="SPARC">
    <location>
        <begin position="18"/>
        <end position="273" status="greater than"/>
    </location>
</feature>
<feature type="domain" description="Follistatin-like">
    <location>
        <begin position="73"/>
        <end position="95"/>
    </location>
</feature>
<feature type="domain" description="Kazal-like" evidence="4">
    <location>
        <begin position="91"/>
        <end position="153"/>
    </location>
</feature>
<feature type="domain" description="EF-hand" evidence="3">
    <location>
        <begin position="263"/>
        <end position="273" status="greater than"/>
    </location>
</feature>
<feature type="glycosylation site" description="N-linked (GlcNAc...) asparagine" evidence="2">
    <location>
        <position position="118"/>
    </location>
</feature>
<feature type="disulfide bond" evidence="4">
    <location>
        <begin position="74"/>
        <end position="85"/>
    </location>
</feature>
<feature type="disulfide bond" evidence="4">
    <location>
        <begin position="79"/>
        <end position="95"/>
    </location>
</feature>
<feature type="disulfide bond" evidence="4">
    <location>
        <begin position="97"/>
        <end position="132"/>
    </location>
</feature>
<feature type="disulfide bond" evidence="4">
    <location>
        <begin position="103"/>
        <end position="125"/>
    </location>
</feature>
<feature type="disulfide bond" evidence="4">
    <location>
        <begin position="114"/>
        <end position="151"/>
    </location>
</feature>
<feature type="disulfide bond" evidence="4">
    <location>
        <begin position="157"/>
        <end position="267"/>
    </location>
</feature>
<feature type="non-terminal residue">
    <location>
        <position position="273"/>
    </location>
</feature>
<sequence length="273" mass="31141">MKAWIFFLVCLAGRALAAPQQEALPDETEVVEETVAEVAEVAEVPVGANPVQVEVGEFEEVEETEEEVVAENPCQNHHCKHGKVCELDENNTPMCVCQDPTSCPAPVGEFEKVCSNDNKTFDSSCHFFATKCTLEGTKKGHKLHLDYIGPCKYIPPCLDSELSEFPLRMRDWLKNVLVTLYERDEGNNLLTEKQKLRVKKIHENEKRLEAGDHPVELLARDFEKNYNMYIFPVHWQFGQLDQHPIDGYLSHTELAPLRAPLIPMEHCTTRFFE</sequence>
<proteinExistence type="evidence at protein level"/>
<organism>
    <name type="scientific">Oryctolagus cuniculus</name>
    <name type="common">Rabbit</name>
    <dbReference type="NCBI Taxonomy" id="9986"/>
    <lineage>
        <taxon>Eukaryota</taxon>
        <taxon>Metazoa</taxon>
        <taxon>Chordata</taxon>
        <taxon>Craniata</taxon>
        <taxon>Vertebrata</taxon>
        <taxon>Euteleostomi</taxon>
        <taxon>Mammalia</taxon>
        <taxon>Eutheria</taxon>
        <taxon>Euarchontoglires</taxon>
        <taxon>Glires</taxon>
        <taxon>Lagomorpha</taxon>
        <taxon>Leporidae</taxon>
        <taxon>Oryctolagus</taxon>
    </lineage>
</organism>
<accession>P36233</accession>
<accession>Q9GLL0</accession>
<gene>
    <name type="primary">SPARC</name>
</gene>
<name>SPRC_RABIT</name>
<protein>
    <recommendedName>
        <fullName>SPARC</fullName>
    </recommendedName>
    <alternativeName>
        <fullName>Basement-membrane protein 40</fullName>
        <shortName>BM-40</shortName>
    </alternativeName>
    <alternativeName>
        <fullName>Osteonectin</fullName>
        <shortName>ON</shortName>
    </alternativeName>
    <alternativeName>
        <fullName>Secreted protein acidic and rich in cysteine</fullName>
    </alternativeName>
</protein>
<evidence type="ECO:0000250" key="1"/>
<evidence type="ECO:0000255" key="2"/>
<evidence type="ECO:0000255" key="3">
    <source>
        <dbReference type="PROSITE-ProRule" id="PRU00448"/>
    </source>
</evidence>
<evidence type="ECO:0000255" key="4">
    <source>
        <dbReference type="PROSITE-ProRule" id="PRU00798"/>
    </source>
</evidence>
<evidence type="ECO:0000269" key="5">
    <source>
    </source>
</evidence>
<evidence type="ECO:0000305" key="6"/>
<comment type="function">
    <text evidence="1">Appears to regulate cell growth through interactions with the extracellular matrix and cytokines. Binds calcium and copper, several types of collagen, albumin, thrombospondin, PDGF and cell membranes. There are two calcium binding sites; an acidic domain that binds 5 to 8 Ca(2+) with a low affinity and an EF-hand loop that binds a Ca(2+) ion with a high affinity (By similarity).</text>
</comment>
<comment type="subcellular location">
    <subcellularLocation>
        <location evidence="1">Secreted</location>
        <location evidence="1">Extracellular space</location>
        <location evidence="1">Extracellular matrix</location>
        <location evidence="1">Basement membrane</location>
    </subcellularLocation>
    <text evidence="1">In or around the basement membrane.</text>
</comment>
<comment type="tissue specificity">
    <text evidence="5">Detected in chondrocytes.</text>
</comment>
<comment type="induction">
    <text evidence="5">By growth factors such as TGF-beta, PDGF, IGF1.</text>
</comment>
<comment type="similarity">
    <text evidence="6">Belongs to the SPARC family.</text>
</comment>
<reference key="1">
    <citation type="submission" date="2000-03" db="EMBL/GenBank/DDBJ databases">
        <title>Differential gene expression of matrix metalloproteinases-1, -3, -13 and aggrecanases-1, -2 in a rabbit model of osteoarthritis.</title>
        <authorList>
            <person name="Bluteau G."/>
            <person name="Mathieu P."/>
            <person name="Conrozier T."/>
            <person name="Vignon E."/>
            <person name="Herbage D."/>
            <person name="Mallein-Gerin F."/>
        </authorList>
    </citation>
    <scope>NUCLEOTIDE SEQUENCE [MRNA]</scope>
</reference>
<reference key="2">
    <citation type="journal article" date="1994" name="Biochim. Biophys. Acta">
        <title>Osteonectin/SPARC is a product of articular chondrocytes/cartilage and is regulated by cytokines and growth factors.</title>
        <authorList>
            <person name="Chandrasekhar S."/>
            <person name="Harvey A.K."/>
            <person name="Johnson M.G."/>
            <person name="Becker G.W."/>
        </authorList>
    </citation>
    <scope>PROTEIN SEQUENCE OF 18-27</scope>
    <scope>TISSUE SPECIFICITY</scope>
    <scope>INDUCTION</scope>
    <source>
        <strain>New Zealand white</strain>
        <tissue>Cartilage</tissue>
    </source>
</reference>